<organism>
    <name type="scientific">Phoneutria nigriventer</name>
    <name type="common">Brazilian armed spider</name>
    <name type="synonym">Ctenus nigriventer</name>
    <dbReference type="NCBI Taxonomy" id="6918"/>
    <lineage>
        <taxon>Eukaryota</taxon>
        <taxon>Metazoa</taxon>
        <taxon>Ecdysozoa</taxon>
        <taxon>Arthropoda</taxon>
        <taxon>Chelicerata</taxon>
        <taxon>Arachnida</taxon>
        <taxon>Araneae</taxon>
        <taxon>Araneomorphae</taxon>
        <taxon>Entelegynae</taxon>
        <taxon>Lycosoidea</taxon>
        <taxon>Ctenidae</taxon>
        <taxon>Phoneutria</taxon>
    </lineage>
</organism>
<reference evidence="4" key="1">
    <citation type="journal article" date="2005" name="Rapid Commun. Mass Spectrom.">
        <title>Electrospray ionization quadrupole time-of-flight and matrix-assisted laser desorption/ionization tandem time-of-flight mass spectrometric analyses to solve micro-heterogeneity in post-translationally modified peptides from Phoneutria nigriventer (Aranea, Ctenidae) venom.</title>
        <authorList>
            <person name="Pimenta A.M.C."/>
            <person name="Rates B."/>
            <person name="Bloch C. Jr."/>
            <person name="Gomes P.C."/>
            <person name="Santoro M.M."/>
            <person name="de Lima M.E."/>
            <person name="Richardson M."/>
            <person name="Cordeiro M.N."/>
        </authorList>
    </citation>
    <scope>PROTEIN SEQUENCE</scope>
    <scope>SUBCELLULAR LOCATION</scope>
    <scope>TISSUE SPECIFICITY</scope>
    <scope>MASS SPECTROMETRY</scope>
    <scope>PYROGLUTAMATE FORMATION AT GLN-1</scope>
    <scope>AMIDATION AT MET-10</scope>
    <source>
        <tissue evidence="2">Venom</tissue>
    </source>
</reference>
<accession>P86303</accession>
<keyword id="KW-0027">Amidation</keyword>
<keyword id="KW-0903">Direct protein sequencing</keyword>
<keyword id="KW-0873">Pyrrolidone carboxylic acid</keyword>
<keyword id="KW-0964">Secreted</keyword>
<evidence type="ECO:0000255" key="1"/>
<evidence type="ECO:0000269" key="2">
    <source>
    </source>
</evidence>
<evidence type="ECO:0000303" key="3">
    <source>
    </source>
</evidence>
<evidence type="ECO:0000305" key="4"/>
<evidence type="ECO:0000305" key="5">
    <source>
    </source>
</evidence>
<dbReference type="GO" id="GO:0005576">
    <property type="term" value="C:extracellular region"/>
    <property type="evidence" value="ECO:0000314"/>
    <property type="project" value="UniProtKB"/>
</dbReference>
<protein>
    <recommendedName>
        <fullName evidence="5">Tachykinin-like peptide-VI</fullName>
    </recommendedName>
    <alternativeName>
        <fullName evidence="3">P.nigriventer tachykinin peptides VI</fullName>
        <shortName evidence="3">PnTkP-VI</shortName>
    </alternativeName>
    <alternativeName>
        <fullName evidence="4">U29-ctenitoxin-Pn1f</fullName>
        <shortName evidence="4">U29-CNTX-Pn1f</shortName>
    </alternativeName>
</protein>
<proteinExistence type="evidence at protein level"/>
<comment type="subcellular location">
    <subcellularLocation>
        <location evidence="2">Secreted</location>
    </subcellularLocation>
</comment>
<comment type="tissue specificity">
    <text evidence="2">Expressed by the venom gland.</text>
</comment>
<comment type="mass spectrometry"/>
<comment type="similarity">
    <text evidence="1">Belongs to the tachykinin family.</text>
</comment>
<sequence>QKKDRFLGLM</sequence>
<name>TLP6_PHONI</name>
<feature type="peptide" id="PRO_0000402816" description="Tachykinin-like peptide-VI" evidence="2">
    <location>
        <begin position="1"/>
        <end position="10"/>
    </location>
</feature>
<feature type="modified residue" description="Pyrrolidone carboxylic acid" evidence="2">
    <location>
        <position position="1"/>
    </location>
</feature>
<feature type="modified residue" description="Methionine amide" evidence="2">
    <location>
        <position position="10"/>
    </location>
</feature>
<feature type="unsure residue" description="L or I" evidence="2">
    <location>
        <position position="7"/>
    </location>
</feature>